<proteinExistence type="evidence at protein level"/>
<accession>P00035</accession>
<keyword id="KW-0903">Direct protein sequencing</keyword>
<keyword id="KW-0249">Electron transport</keyword>
<keyword id="KW-0349">Heme</keyword>
<keyword id="KW-0408">Iron</keyword>
<keyword id="KW-0479">Metal-binding</keyword>
<keyword id="KW-0496">Mitochondrion</keyword>
<keyword id="KW-0679">Respiratory chain</keyword>
<keyword id="KW-0813">Transport</keyword>
<evidence type="ECO:0000269" key="1">
    <source ref="1"/>
</evidence>
<evidence type="ECO:0000305" key="2"/>
<organism>
    <name type="scientific">Haematobia irritans</name>
    <name type="common">Horn fly</name>
    <name type="synonym">Conops irritans</name>
    <dbReference type="NCBI Taxonomy" id="7368"/>
    <lineage>
        <taxon>Eukaryota</taxon>
        <taxon>Metazoa</taxon>
        <taxon>Ecdysozoa</taxon>
        <taxon>Arthropoda</taxon>
        <taxon>Hexapoda</taxon>
        <taxon>Insecta</taxon>
        <taxon>Pterygota</taxon>
        <taxon>Neoptera</taxon>
        <taxon>Endopterygota</taxon>
        <taxon>Diptera</taxon>
        <taxon>Brachycera</taxon>
        <taxon>Muscomorpha</taxon>
        <taxon>Muscoidea</taxon>
        <taxon>Muscidae</taxon>
        <taxon>Haematobia</taxon>
    </lineage>
</organism>
<reference key="1">
    <citation type="submission" date="1967-07" db="PIR data bank">
        <authorList>
            <person name="Chan S.K."/>
            <person name="Tulloss I."/>
            <person name="Margoliash E."/>
        </authorList>
    </citation>
    <scope>PROTEIN SEQUENCE OF 2-108</scope>
</reference>
<dbReference type="PIR" id="A38040">
    <property type="entry name" value="CCFHHF"/>
</dbReference>
<dbReference type="SMR" id="P00035"/>
<dbReference type="GO" id="GO:0005758">
    <property type="term" value="C:mitochondrial intermembrane space"/>
    <property type="evidence" value="ECO:0007669"/>
    <property type="project" value="UniProtKB-SubCell"/>
</dbReference>
<dbReference type="GO" id="GO:0009055">
    <property type="term" value="F:electron transfer activity"/>
    <property type="evidence" value="ECO:0007669"/>
    <property type="project" value="InterPro"/>
</dbReference>
<dbReference type="GO" id="GO:0020037">
    <property type="term" value="F:heme binding"/>
    <property type="evidence" value="ECO:0007669"/>
    <property type="project" value="InterPro"/>
</dbReference>
<dbReference type="GO" id="GO:0046872">
    <property type="term" value="F:metal ion binding"/>
    <property type="evidence" value="ECO:0007669"/>
    <property type="project" value="UniProtKB-KW"/>
</dbReference>
<dbReference type="FunFam" id="1.10.760.10:FF:000001">
    <property type="entry name" value="Cytochrome c iso-1"/>
    <property type="match status" value="1"/>
</dbReference>
<dbReference type="Gene3D" id="1.10.760.10">
    <property type="entry name" value="Cytochrome c-like domain"/>
    <property type="match status" value="1"/>
</dbReference>
<dbReference type="InterPro" id="IPR009056">
    <property type="entry name" value="Cyt_c-like_dom"/>
</dbReference>
<dbReference type="InterPro" id="IPR036909">
    <property type="entry name" value="Cyt_c-like_dom_sf"/>
</dbReference>
<dbReference type="InterPro" id="IPR002327">
    <property type="entry name" value="Cyt_c_1A/1B"/>
</dbReference>
<dbReference type="PANTHER" id="PTHR11961">
    <property type="entry name" value="CYTOCHROME C"/>
    <property type="match status" value="1"/>
</dbReference>
<dbReference type="Pfam" id="PF00034">
    <property type="entry name" value="Cytochrom_C"/>
    <property type="match status" value="1"/>
</dbReference>
<dbReference type="PRINTS" id="PR00604">
    <property type="entry name" value="CYTCHRMECIAB"/>
</dbReference>
<dbReference type="SUPFAM" id="SSF46626">
    <property type="entry name" value="Cytochrome c"/>
    <property type="match status" value="1"/>
</dbReference>
<dbReference type="PROSITE" id="PS51007">
    <property type="entry name" value="CYTC"/>
    <property type="match status" value="1"/>
</dbReference>
<feature type="initiator methionine" description="Removed" evidence="1">
    <location>
        <position position="1"/>
    </location>
</feature>
<feature type="chain" id="PRO_0000108262" description="Cytochrome c">
    <location>
        <begin position="2"/>
        <end position="108"/>
    </location>
</feature>
<feature type="binding site" description="covalent">
    <location>
        <position position="19"/>
    </location>
    <ligand>
        <name>heme c</name>
        <dbReference type="ChEBI" id="CHEBI:61717"/>
    </ligand>
</feature>
<feature type="binding site" description="covalent">
    <location>
        <position position="22"/>
    </location>
    <ligand>
        <name>heme c</name>
        <dbReference type="ChEBI" id="CHEBI:61717"/>
    </ligand>
</feature>
<feature type="binding site" description="axial binding residue">
    <location>
        <position position="23"/>
    </location>
    <ligand>
        <name>heme c</name>
        <dbReference type="ChEBI" id="CHEBI:61717"/>
    </ligand>
    <ligandPart>
        <name>Fe</name>
        <dbReference type="ChEBI" id="CHEBI:18248"/>
    </ligandPart>
</feature>
<feature type="binding site" description="axial binding residue">
    <location>
        <position position="85"/>
    </location>
    <ligand>
        <name>heme c</name>
        <dbReference type="ChEBI" id="CHEBI:61717"/>
    </ligand>
    <ligandPart>
        <name>Fe</name>
        <dbReference type="ChEBI" id="CHEBI:18248"/>
    </ligandPart>
</feature>
<name>CYC_HAEIR</name>
<sequence length="108" mass="11768">MGVPAGDVEKGKKIFVQRCAQCHTVEAGGKHKVGPNLHGLFGRKTGQAAGFAYTNANKAKGITWQDDTLFEYLENPKKYIPGTKMIFAGLKKPNERGDLIAYLKSATK</sequence>
<protein>
    <recommendedName>
        <fullName>Cytochrome c</fullName>
    </recommendedName>
</protein>
<comment type="function">
    <text>Electron carrier protein. The oxidized form of the cytochrome c heme group can accept an electron from the heme group of the cytochrome c1 subunit of cytochrome reductase. Cytochrome c then transfers this electron to the cytochrome oxidase complex, the final protein carrier in the mitochondrial electron-transport chain.</text>
</comment>
<comment type="subcellular location">
    <subcellularLocation>
        <location>Mitochondrion intermembrane space</location>
    </subcellularLocation>
    <text>Loosely associated with the inner membrane.</text>
</comment>
<comment type="PTM">
    <text>Binds 1 heme c group covalently per subunit.</text>
</comment>
<comment type="similarity">
    <text evidence="2">Belongs to the cytochrome c family.</text>
</comment>
<comment type="online information" name="Protein Spotlight">
    <link uri="https://www.proteinspotlight.org/back_issues/076"/>
    <text>Life shuttle - Issue 76 of November 2006</text>
</comment>